<name>MSRA_METAC</name>
<sequence length="188" mass="21284">MEGNEKAEQKNATSEESTDIFENPGEGLEKATFAAGCFWGIEEAFRQVKGVVATAVGYSGGHFEKPTYEQVCTLDTGHAEAVRVIFDPKVVSYKNLLDVFWKIHDPTTKNRQGPDVGKQYRSVIFYHNEEQKAAALASKEELEKAGVFKNPIVTEIVPVSEFYMAEDYHQQYFEKKGFLQNILRSFKK</sequence>
<proteinExistence type="inferred from homology"/>
<dbReference type="EC" id="1.8.4.11" evidence="1"/>
<dbReference type="EMBL" id="AE010299">
    <property type="protein sequence ID" value="AAM04846.1"/>
    <property type="molecule type" value="Genomic_DNA"/>
</dbReference>
<dbReference type="RefSeq" id="WP_011021447.1">
    <property type="nucleotide sequence ID" value="NC_003552.1"/>
</dbReference>
<dbReference type="SMR" id="Q8TQV6"/>
<dbReference type="STRING" id="188937.MA_1431"/>
<dbReference type="EnsemblBacteria" id="AAM04846">
    <property type="protein sequence ID" value="AAM04846"/>
    <property type="gene ID" value="MA_1431"/>
</dbReference>
<dbReference type="GeneID" id="1473319"/>
<dbReference type="KEGG" id="mac:MA_1431"/>
<dbReference type="HOGENOM" id="CLU_031040_10_0_2"/>
<dbReference type="InParanoid" id="Q8TQV6"/>
<dbReference type="OrthoDB" id="7150at2157"/>
<dbReference type="PhylomeDB" id="Q8TQV6"/>
<dbReference type="Proteomes" id="UP000002487">
    <property type="component" value="Chromosome"/>
</dbReference>
<dbReference type="GO" id="GO:0005737">
    <property type="term" value="C:cytoplasm"/>
    <property type="evidence" value="ECO:0000318"/>
    <property type="project" value="GO_Central"/>
</dbReference>
<dbReference type="GO" id="GO:0036456">
    <property type="term" value="F:L-methionine-(S)-S-oxide reductase activity"/>
    <property type="evidence" value="ECO:0000318"/>
    <property type="project" value="GO_Central"/>
</dbReference>
<dbReference type="GO" id="GO:0008113">
    <property type="term" value="F:peptide-methionine (S)-S-oxide reductase activity"/>
    <property type="evidence" value="ECO:0000318"/>
    <property type="project" value="GO_Central"/>
</dbReference>
<dbReference type="GO" id="GO:0034599">
    <property type="term" value="P:cellular response to oxidative stress"/>
    <property type="evidence" value="ECO:0000318"/>
    <property type="project" value="GO_Central"/>
</dbReference>
<dbReference type="GO" id="GO:0036211">
    <property type="term" value="P:protein modification process"/>
    <property type="evidence" value="ECO:0007669"/>
    <property type="project" value="UniProtKB-UniRule"/>
</dbReference>
<dbReference type="FunFam" id="3.30.1060.10:FF:000008">
    <property type="entry name" value="Peptide methionine sulfoxide reductase MsrA"/>
    <property type="match status" value="1"/>
</dbReference>
<dbReference type="Gene3D" id="3.30.1060.10">
    <property type="entry name" value="Peptide methionine sulphoxide reductase MsrA"/>
    <property type="match status" value="1"/>
</dbReference>
<dbReference type="HAMAP" id="MF_01401">
    <property type="entry name" value="MsrA"/>
    <property type="match status" value="1"/>
</dbReference>
<dbReference type="InterPro" id="IPR002569">
    <property type="entry name" value="Met_Sox_Rdtase_MsrA_dom"/>
</dbReference>
<dbReference type="InterPro" id="IPR036509">
    <property type="entry name" value="Met_Sox_Rdtase_MsrA_sf"/>
</dbReference>
<dbReference type="NCBIfam" id="TIGR00401">
    <property type="entry name" value="msrA"/>
    <property type="match status" value="1"/>
</dbReference>
<dbReference type="PANTHER" id="PTHR43774">
    <property type="entry name" value="PEPTIDE METHIONINE SULFOXIDE REDUCTASE"/>
    <property type="match status" value="1"/>
</dbReference>
<dbReference type="PANTHER" id="PTHR43774:SF1">
    <property type="entry name" value="PEPTIDE METHIONINE SULFOXIDE REDUCTASE MSRA 2"/>
    <property type="match status" value="1"/>
</dbReference>
<dbReference type="Pfam" id="PF01625">
    <property type="entry name" value="PMSR"/>
    <property type="match status" value="1"/>
</dbReference>
<dbReference type="SUPFAM" id="SSF55068">
    <property type="entry name" value="Peptide methionine sulfoxide reductase"/>
    <property type="match status" value="1"/>
</dbReference>
<gene>
    <name evidence="1" type="primary">msrA</name>
    <name type="ordered locus">MA_1431</name>
</gene>
<comment type="function">
    <text evidence="1">Has an important function as a repair enzyme for proteins that have been inactivated by oxidation. Catalyzes the reversible oxidation-reduction of methionine sulfoxide in proteins to methionine.</text>
</comment>
<comment type="catalytic activity">
    <reaction evidence="1">
        <text>L-methionyl-[protein] + [thioredoxin]-disulfide + H2O = L-methionyl-(S)-S-oxide-[protein] + [thioredoxin]-dithiol</text>
        <dbReference type="Rhea" id="RHEA:14217"/>
        <dbReference type="Rhea" id="RHEA-COMP:10698"/>
        <dbReference type="Rhea" id="RHEA-COMP:10700"/>
        <dbReference type="Rhea" id="RHEA-COMP:12313"/>
        <dbReference type="Rhea" id="RHEA-COMP:12315"/>
        <dbReference type="ChEBI" id="CHEBI:15377"/>
        <dbReference type="ChEBI" id="CHEBI:16044"/>
        <dbReference type="ChEBI" id="CHEBI:29950"/>
        <dbReference type="ChEBI" id="CHEBI:44120"/>
        <dbReference type="ChEBI" id="CHEBI:50058"/>
        <dbReference type="EC" id="1.8.4.11"/>
    </reaction>
</comment>
<comment type="catalytic activity">
    <reaction evidence="1">
        <text>[thioredoxin]-disulfide + L-methionine + H2O = L-methionine (S)-S-oxide + [thioredoxin]-dithiol</text>
        <dbReference type="Rhea" id="RHEA:19993"/>
        <dbReference type="Rhea" id="RHEA-COMP:10698"/>
        <dbReference type="Rhea" id="RHEA-COMP:10700"/>
        <dbReference type="ChEBI" id="CHEBI:15377"/>
        <dbReference type="ChEBI" id="CHEBI:29950"/>
        <dbReference type="ChEBI" id="CHEBI:50058"/>
        <dbReference type="ChEBI" id="CHEBI:57844"/>
        <dbReference type="ChEBI" id="CHEBI:58772"/>
        <dbReference type="EC" id="1.8.4.11"/>
    </reaction>
</comment>
<comment type="similarity">
    <text evidence="1">Belongs to the MsrA Met sulfoxide reductase family.</text>
</comment>
<organism>
    <name type="scientific">Methanosarcina acetivorans (strain ATCC 35395 / DSM 2834 / JCM 12185 / C2A)</name>
    <dbReference type="NCBI Taxonomy" id="188937"/>
    <lineage>
        <taxon>Archaea</taxon>
        <taxon>Methanobacteriati</taxon>
        <taxon>Methanobacteriota</taxon>
        <taxon>Stenosarchaea group</taxon>
        <taxon>Methanomicrobia</taxon>
        <taxon>Methanosarcinales</taxon>
        <taxon>Methanosarcinaceae</taxon>
        <taxon>Methanosarcina</taxon>
    </lineage>
</organism>
<evidence type="ECO:0000255" key="1">
    <source>
        <dbReference type="HAMAP-Rule" id="MF_01401"/>
    </source>
</evidence>
<evidence type="ECO:0000256" key="2">
    <source>
        <dbReference type="SAM" id="MobiDB-lite"/>
    </source>
</evidence>
<keyword id="KW-0560">Oxidoreductase</keyword>
<keyword id="KW-1185">Reference proteome</keyword>
<feature type="chain" id="PRO_0000138618" description="Peptide methionine sulfoxide reductase MsrA">
    <location>
        <begin position="1"/>
        <end position="188"/>
    </location>
</feature>
<feature type="region of interest" description="Disordered" evidence="2">
    <location>
        <begin position="1"/>
        <end position="25"/>
    </location>
</feature>
<feature type="active site" evidence="1">
    <location>
        <position position="37"/>
    </location>
</feature>
<protein>
    <recommendedName>
        <fullName evidence="1">Peptide methionine sulfoxide reductase MsrA</fullName>
        <shortName evidence="1">Protein-methionine-S-oxide reductase</shortName>
        <ecNumber evidence="1">1.8.4.11</ecNumber>
    </recommendedName>
    <alternativeName>
        <fullName evidence="1">Peptide-methionine (S)-S-oxide reductase</fullName>
        <shortName evidence="1">Peptide Met(O) reductase</shortName>
    </alternativeName>
</protein>
<reference key="1">
    <citation type="journal article" date="2002" name="Genome Res.">
        <title>The genome of Methanosarcina acetivorans reveals extensive metabolic and physiological diversity.</title>
        <authorList>
            <person name="Galagan J.E."/>
            <person name="Nusbaum C."/>
            <person name="Roy A."/>
            <person name="Endrizzi M.G."/>
            <person name="Macdonald P."/>
            <person name="FitzHugh W."/>
            <person name="Calvo S."/>
            <person name="Engels R."/>
            <person name="Smirnov S."/>
            <person name="Atnoor D."/>
            <person name="Brown A."/>
            <person name="Allen N."/>
            <person name="Naylor J."/>
            <person name="Stange-Thomann N."/>
            <person name="DeArellano K."/>
            <person name="Johnson R."/>
            <person name="Linton L."/>
            <person name="McEwan P."/>
            <person name="McKernan K."/>
            <person name="Talamas J."/>
            <person name="Tirrell A."/>
            <person name="Ye W."/>
            <person name="Zimmer A."/>
            <person name="Barber R.D."/>
            <person name="Cann I."/>
            <person name="Graham D.E."/>
            <person name="Grahame D.A."/>
            <person name="Guss A.M."/>
            <person name="Hedderich R."/>
            <person name="Ingram-Smith C."/>
            <person name="Kuettner H.C."/>
            <person name="Krzycki J.A."/>
            <person name="Leigh J.A."/>
            <person name="Li W."/>
            <person name="Liu J."/>
            <person name="Mukhopadhyay B."/>
            <person name="Reeve J.N."/>
            <person name="Smith K."/>
            <person name="Springer T.A."/>
            <person name="Umayam L.A."/>
            <person name="White O."/>
            <person name="White R.H."/>
            <person name="de Macario E.C."/>
            <person name="Ferry J.G."/>
            <person name="Jarrell K.F."/>
            <person name="Jing H."/>
            <person name="Macario A.J.L."/>
            <person name="Paulsen I.T."/>
            <person name="Pritchett M."/>
            <person name="Sowers K.R."/>
            <person name="Swanson R.V."/>
            <person name="Zinder S.H."/>
            <person name="Lander E."/>
            <person name="Metcalf W.W."/>
            <person name="Birren B."/>
        </authorList>
    </citation>
    <scope>NUCLEOTIDE SEQUENCE [LARGE SCALE GENOMIC DNA]</scope>
    <source>
        <strain>ATCC 35395 / DSM 2834 / JCM 12185 / C2A</strain>
    </source>
</reference>
<accession>Q8TQV6</accession>